<feature type="chain" id="PRO_1000005199" description="Small ribosomal subunit protein eS1">
    <location>
        <begin position="1"/>
        <end position="222"/>
    </location>
</feature>
<proteinExistence type="evidence at protein level"/>
<keyword id="KW-0002">3D-structure</keyword>
<keyword id="KW-0687">Ribonucleoprotein</keyword>
<keyword id="KW-0689">Ribosomal protein</keyword>
<protein>
    <recommendedName>
        <fullName evidence="1">Small ribosomal subunit protein eS1</fullName>
    </recommendedName>
    <alternativeName>
        <fullName evidence="2">30S ribosomal protein S3Ae</fullName>
    </alternativeName>
    <alternativeName>
        <fullName evidence="1">Ribosomal protein S1e</fullName>
    </alternativeName>
</protein>
<gene>
    <name evidence="1" type="primary">rps3ae</name>
    <name type="ordered locus">Pcal_1182</name>
</gene>
<evidence type="ECO:0000255" key="1">
    <source>
        <dbReference type="HAMAP-Rule" id="MF_00359"/>
    </source>
</evidence>
<evidence type="ECO:0000305" key="2"/>
<organism>
    <name type="scientific">Pyrobaculum calidifontis (strain DSM 21063 / JCM 11548 / VA1)</name>
    <dbReference type="NCBI Taxonomy" id="410359"/>
    <lineage>
        <taxon>Archaea</taxon>
        <taxon>Thermoproteota</taxon>
        <taxon>Thermoprotei</taxon>
        <taxon>Thermoproteales</taxon>
        <taxon>Thermoproteaceae</taxon>
        <taxon>Pyrobaculum</taxon>
    </lineage>
</organism>
<name>RS3A_PYRCJ</name>
<sequence length="222" mass="24696">MAEKQKAVAAQEKVAISKRDPWALKKWFSVYAPPYLGGVFLAEVPAAEAQKLVKRTLEVTLYDITKDISHLPIKLRFQIHRVDGLNASTRFKGLELTRDYLRSLIRRGTSKIMAITDVKTKDGWVMRVAVLGVTTHRVGTAQKSAIRKRFIEVVTKKAAEADIGQFLKEVLEGTLAADLFIAGKKIAPMRKVEVAKIKVLRYPPEEERVAVKEVAAEAAASS</sequence>
<reference key="1">
    <citation type="submission" date="2007-02" db="EMBL/GenBank/DDBJ databases">
        <title>Complete sequence of Pyrobaculum calidifontis JCM 11548.</title>
        <authorList>
            <consortium name="US DOE Joint Genome Institute"/>
            <person name="Copeland A."/>
            <person name="Lucas S."/>
            <person name="Lapidus A."/>
            <person name="Barry K."/>
            <person name="Glavina del Rio T."/>
            <person name="Dalin E."/>
            <person name="Tice H."/>
            <person name="Pitluck S."/>
            <person name="Chain P."/>
            <person name="Malfatti S."/>
            <person name="Shin M."/>
            <person name="Vergez L."/>
            <person name="Schmutz J."/>
            <person name="Larimer F."/>
            <person name="Land M."/>
            <person name="Hauser L."/>
            <person name="Kyrpides N."/>
            <person name="Mikhailova N."/>
            <person name="Cozen A.E."/>
            <person name="Fitz-Gibbon S.T."/>
            <person name="House C.H."/>
            <person name="Saltikov C."/>
            <person name="Lowe T.M."/>
            <person name="Richardson P."/>
        </authorList>
    </citation>
    <scope>NUCLEOTIDE SEQUENCE [LARGE SCALE GENOMIC DNA]</scope>
    <source>
        <strain>DSM 21063 / JCM 11548 / VA1</strain>
    </source>
</reference>
<accession>A3MVE0</accession>
<dbReference type="EMBL" id="CP000561">
    <property type="protein sequence ID" value="ABO08607.1"/>
    <property type="molecule type" value="Genomic_DNA"/>
</dbReference>
<dbReference type="RefSeq" id="WP_011849865.1">
    <property type="nucleotide sequence ID" value="NC_009073.1"/>
</dbReference>
<dbReference type="PDB" id="9E71">
    <property type="method" value="EM"/>
    <property type="resolution" value="2.36 A"/>
    <property type="chains" value="BA=1-222"/>
</dbReference>
<dbReference type="PDB" id="9E7F">
    <property type="method" value="EM"/>
    <property type="resolution" value="2.53 A"/>
    <property type="chains" value="BA=1-222"/>
</dbReference>
<dbReference type="PDBsum" id="9E71"/>
<dbReference type="PDBsum" id="9E7F"/>
<dbReference type="EMDB" id="EMD-47628"/>
<dbReference type="EMDB" id="EMD-47668"/>
<dbReference type="SMR" id="A3MVE0"/>
<dbReference type="STRING" id="410359.Pcal_1182"/>
<dbReference type="GeneID" id="4908954"/>
<dbReference type="KEGG" id="pcl:Pcal_1182"/>
<dbReference type="eggNOG" id="arCOG04186">
    <property type="taxonomic scope" value="Archaea"/>
</dbReference>
<dbReference type="HOGENOM" id="CLU_062507_1_0_2"/>
<dbReference type="OrthoDB" id="30639at2157"/>
<dbReference type="Proteomes" id="UP000001431">
    <property type="component" value="Chromosome"/>
</dbReference>
<dbReference type="GO" id="GO:1990904">
    <property type="term" value="C:ribonucleoprotein complex"/>
    <property type="evidence" value="ECO:0007669"/>
    <property type="project" value="UniProtKB-KW"/>
</dbReference>
<dbReference type="GO" id="GO:0005840">
    <property type="term" value="C:ribosome"/>
    <property type="evidence" value="ECO:0007669"/>
    <property type="project" value="UniProtKB-KW"/>
</dbReference>
<dbReference type="GO" id="GO:0003735">
    <property type="term" value="F:structural constituent of ribosome"/>
    <property type="evidence" value="ECO:0007669"/>
    <property type="project" value="InterPro"/>
</dbReference>
<dbReference type="GO" id="GO:0006412">
    <property type="term" value="P:translation"/>
    <property type="evidence" value="ECO:0007669"/>
    <property type="project" value="UniProtKB-UniRule"/>
</dbReference>
<dbReference type="HAMAP" id="MF_00359">
    <property type="entry name" value="Ribosomal_eS1"/>
    <property type="match status" value="1"/>
</dbReference>
<dbReference type="InterPro" id="IPR001593">
    <property type="entry name" value="Ribosomal_eS1"/>
</dbReference>
<dbReference type="InterPro" id="IPR030838">
    <property type="entry name" value="Ribosomal_eS1_arc"/>
</dbReference>
<dbReference type="NCBIfam" id="NF003142">
    <property type="entry name" value="PRK04057.1"/>
    <property type="match status" value="1"/>
</dbReference>
<dbReference type="PANTHER" id="PTHR11830">
    <property type="entry name" value="40S RIBOSOMAL PROTEIN S3A"/>
    <property type="match status" value="1"/>
</dbReference>
<dbReference type="Pfam" id="PF01015">
    <property type="entry name" value="Ribosomal_S3Ae"/>
    <property type="match status" value="1"/>
</dbReference>
<dbReference type="SMART" id="SM01397">
    <property type="entry name" value="Ribosomal_S3Ae"/>
    <property type="match status" value="1"/>
</dbReference>
<comment type="similarity">
    <text evidence="1">Belongs to the eukaryotic ribosomal protein eS1 family.</text>
</comment>